<dbReference type="EC" id="4.1.1.39" evidence="1"/>
<dbReference type="EMBL" id="X83640">
    <property type="protein sequence ID" value="CAA58617.1"/>
    <property type="molecule type" value="Genomic_DNA"/>
</dbReference>
<dbReference type="GO" id="GO:0009507">
    <property type="term" value="C:chloroplast"/>
    <property type="evidence" value="ECO:0007669"/>
    <property type="project" value="UniProtKB-SubCell"/>
</dbReference>
<dbReference type="GO" id="GO:0000287">
    <property type="term" value="F:magnesium ion binding"/>
    <property type="evidence" value="ECO:0007669"/>
    <property type="project" value="InterPro"/>
</dbReference>
<dbReference type="GO" id="GO:0004497">
    <property type="term" value="F:monooxygenase activity"/>
    <property type="evidence" value="ECO:0007669"/>
    <property type="project" value="UniProtKB-KW"/>
</dbReference>
<dbReference type="GO" id="GO:0016984">
    <property type="term" value="F:ribulose-bisphosphate carboxylase activity"/>
    <property type="evidence" value="ECO:0007669"/>
    <property type="project" value="UniProtKB-EC"/>
</dbReference>
<dbReference type="GO" id="GO:0009853">
    <property type="term" value="P:photorespiration"/>
    <property type="evidence" value="ECO:0007669"/>
    <property type="project" value="UniProtKB-KW"/>
</dbReference>
<dbReference type="GO" id="GO:0019253">
    <property type="term" value="P:reductive pentose-phosphate cycle"/>
    <property type="evidence" value="ECO:0007669"/>
    <property type="project" value="UniProtKB-KW"/>
</dbReference>
<dbReference type="CDD" id="cd08212">
    <property type="entry name" value="RuBisCO_large_I"/>
    <property type="match status" value="1"/>
</dbReference>
<dbReference type="FunFam" id="3.20.20.110:FF:000001">
    <property type="entry name" value="Ribulose bisphosphate carboxylase large chain"/>
    <property type="match status" value="1"/>
</dbReference>
<dbReference type="FunFam" id="3.30.70.150:FF:000001">
    <property type="entry name" value="Ribulose bisphosphate carboxylase large chain"/>
    <property type="match status" value="1"/>
</dbReference>
<dbReference type="Gene3D" id="3.20.20.110">
    <property type="entry name" value="Ribulose bisphosphate carboxylase, large subunit, C-terminal domain"/>
    <property type="match status" value="1"/>
</dbReference>
<dbReference type="Gene3D" id="3.30.70.150">
    <property type="entry name" value="RuBisCO large subunit, N-terminal domain"/>
    <property type="match status" value="1"/>
</dbReference>
<dbReference type="HAMAP" id="MF_01338">
    <property type="entry name" value="RuBisCO_L_type1"/>
    <property type="match status" value="1"/>
</dbReference>
<dbReference type="InterPro" id="IPR033966">
    <property type="entry name" value="RuBisCO"/>
</dbReference>
<dbReference type="InterPro" id="IPR020878">
    <property type="entry name" value="RuBisCo_large_chain_AS"/>
</dbReference>
<dbReference type="InterPro" id="IPR000685">
    <property type="entry name" value="RuBisCO_lsu_C"/>
</dbReference>
<dbReference type="InterPro" id="IPR036376">
    <property type="entry name" value="RuBisCO_lsu_C_sf"/>
</dbReference>
<dbReference type="InterPro" id="IPR017443">
    <property type="entry name" value="RuBisCO_lsu_fd_N"/>
</dbReference>
<dbReference type="InterPro" id="IPR036422">
    <property type="entry name" value="RuBisCO_lsu_N_sf"/>
</dbReference>
<dbReference type="InterPro" id="IPR020888">
    <property type="entry name" value="RuBisCO_lsuI"/>
</dbReference>
<dbReference type="NCBIfam" id="NF003252">
    <property type="entry name" value="PRK04208.1"/>
    <property type="match status" value="1"/>
</dbReference>
<dbReference type="PANTHER" id="PTHR42704">
    <property type="entry name" value="RIBULOSE BISPHOSPHATE CARBOXYLASE"/>
    <property type="match status" value="1"/>
</dbReference>
<dbReference type="PANTHER" id="PTHR42704:SF15">
    <property type="entry name" value="RIBULOSE BISPHOSPHATE CARBOXYLASE LARGE CHAIN"/>
    <property type="match status" value="1"/>
</dbReference>
<dbReference type="Pfam" id="PF00016">
    <property type="entry name" value="RuBisCO_large"/>
    <property type="match status" value="1"/>
</dbReference>
<dbReference type="Pfam" id="PF02788">
    <property type="entry name" value="RuBisCO_large_N"/>
    <property type="match status" value="1"/>
</dbReference>
<dbReference type="SFLD" id="SFLDG01052">
    <property type="entry name" value="RuBisCO"/>
    <property type="match status" value="1"/>
</dbReference>
<dbReference type="SFLD" id="SFLDS00014">
    <property type="entry name" value="RuBisCO"/>
    <property type="match status" value="1"/>
</dbReference>
<dbReference type="SFLD" id="SFLDG00301">
    <property type="entry name" value="RuBisCO-like_proteins"/>
    <property type="match status" value="1"/>
</dbReference>
<dbReference type="SUPFAM" id="SSF51649">
    <property type="entry name" value="RuBisCo, C-terminal domain"/>
    <property type="match status" value="1"/>
</dbReference>
<dbReference type="SUPFAM" id="SSF54966">
    <property type="entry name" value="RuBisCO, large subunit, small (N-terminal) domain"/>
    <property type="match status" value="1"/>
</dbReference>
<dbReference type="PROSITE" id="PS00157">
    <property type="entry name" value="RUBISCO_LARGE"/>
    <property type="match status" value="1"/>
</dbReference>
<evidence type="ECO:0000255" key="1">
    <source>
        <dbReference type="HAMAP-Rule" id="MF_01338"/>
    </source>
</evidence>
<proteinExistence type="inferred from homology"/>
<name>RBL_FLERU</name>
<gene>
    <name evidence="1" type="primary">rbcL</name>
</gene>
<accession>Q33528</accession>
<sequence length="469" mass="52105">SVGFKAGVKEYKLTYYTPEYETKETDILAAFRVTPQPGVPPEEAGAAVAAESSTGTWTTVWTDGLTSLDRYKGRCYHIEPVPGEEDQYIAYVAYPLDLFEEGSVTNMFTSIVGNVFGFKALRALRLEDLRIPVAYTKXFQGPXHGIQVERDKLNKYGRPLLGCTIKPKLGLSAKNYGRAVYECLRGGLDFTKDDENVNSQPFMRWRDRFLFCAEAFYKAQAETGEIKGHYLNATAGTCEEMIKRAVFARELGVPIXMHDYLTGGFTANTSLAHYCRDNGLLLHIHRAMHAVIDRQKNHGMHFRVLAKALRLSGGDHIHAGTVVGKLEGERDTTLGFVDLLRDDFIEKDRSRGIYFTQDWVSLPGVLPVRSGGIHVWHMPALTEIFGDDSVLQFGGGTLGHPWGNAPGAVANRVALEACVKARNEGRDLAAEGNEIIREASKWSPELAAACEVWKEIRFNFKAVDTLDPS</sequence>
<protein>
    <recommendedName>
        <fullName evidence="1">Ribulose bisphosphate carboxylase large chain</fullName>
        <shortName evidence="1">RuBisCO large subunit</shortName>
        <ecNumber evidence="1">4.1.1.39</ecNumber>
    </recommendedName>
</protein>
<organism>
    <name type="scientific">Fleroya rubrostipulata</name>
    <name type="common">Mitragyna rubrostipulata</name>
    <dbReference type="NCBI Taxonomy" id="43495"/>
    <lineage>
        <taxon>Eukaryota</taxon>
        <taxon>Viridiplantae</taxon>
        <taxon>Streptophyta</taxon>
        <taxon>Embryophyta</taxon>
        <taxon>Tracheophyta</taxon>
        <taxon>Spermatophyta</taxon>
        <taxon>Magnoliopsida</taxon>
        <taxon>eudicotyledons</taxon>
        <taxon>Gunneridae</taxon>
        <taxon>Pentapetalae</taxon>
        <taxon>asterids</taxon>
        <taxon>lamiids</taxon>
        <taxon>Gentianales</taxon>
        <taxon>Rubiaceae</taxon>
        <taxon>Cinchonoideae</taxon>
        <taxon>Naucleeae</taxon>
        <taxon>Fleroya</taxon>
    </lineage>
</organism>
<reference key="1">
    <citation type="journal article" date="1995" name="Ann. Mo. Bot. Gard.">
        <title>Subfamilial and tribal relationships in the Rubiaceae based on rbcL sequence data.</title>
        <authorList>
            <person name="Bremer B."/>
            <person name="Andreasen K."/>
            <person name="Olsson D."/>
        </authorList>
    </citation>
    <scope>NUCLEOTIDE SEQUENCE [GENOMIC DNA]</scope>
</reference>
<geneLocation type="chloroplast"/>
<keyword id="KW-0113">Calvin cycle</keyword>
<keyword id="KW-0120">Carbon dioxide fixation</keyword>
<keyword id="KW-0150">Chloroplast</keyword>
<keyword id="KW-1015">Disulfide bond</keyword>
<keyword id="KW-0456">Lyase</keyword>
<keyword id="KW-0460">Magnesium</keyword>
<keyword id="KW-0479">Metal-binding</keyword>
<keyword id="KW-0488">Methylation</keyword>
<keyword id="KW-0503">Monooxygenase</keyword>
<keyword id="KW-0560">Oxidoreductase</keyword>
<keyword id="KW-0601">Photorespiration</keyword>
<keyword id="KW-0602">Photosynthesis</keyword>
<keyword id="KW-0934">Plastid</keyword>
<comment type="function">
    <text evidence="1">RuBisCO catalyzes two reactions: the carboxylation of D-ribulose 1,5-bisphosphate, the primary event in carbon dioxide fixation, as well as the oxidative fragmentation of the pentose substrate in the photorespiration process. Both reactions occur simultaneously and in competition at the same active site.</text>
</comment>
<comment type="catalytic activity">
    <reaction evidence="1">
        <text>2 (2R)-3-phosphoglycerate + 2 H(+) = D-ribulose 1,5-bisphosphate + CO2 + H2O</text>
        <dbReference type="Rhea" id="RHEA:23124"/>
        <dbReference type="ChEBI" id="CHEBI:15377"/>
        <dbReference type="ChEBI" id="CHEBI:15378"/>
        <dbReference type="ChEBI" id="CHEBI:16526"/>
        <dbReference type="ChEBI" id="CHEBI:57870"/>
        <dbReference type="ChEBI" id="CHEBI:58272"/>
        <dbReference type="EC" id="4.1.1.39"/>
    </reaction>
</comment>
<comment type="catalytic activity">
    <reaction evidence="1">
        <text>D-ribulose 1,5-bisphosphate + O2 = 2-phosphoglycolate + (2R)-3-phosphoglycerate + 2 H(+)</text>
        <dbReference type="Rhea" id="RHEA:36631"/>
        <dbReference type="ChEBI" id="CHEBI:15378"/>
        <dbReference type="ChEBI" id="CHEBI:15379"/>
        <dbReference type="ChEBI" id="CHEBI:57870"/>
        <dbReference type="ChEBI" id="CHEBI:58033"/>
        <dbReference type="ChEBI" id="CHEBI:58272"/>
    </reaction>
</comment>
<comment type="cofactor">
    <cofactor evidence="1">
        <name>Mg(2+)</name>
        <dbReference type="ChEBI" id="CHEBI:18420"/>
    </cofactor>
    <text evidence="1">Binds 1 Mg(2+) ion per subunit.</text>
</comment>
<comment type="subunit">
    <text evidence="1">Heterohexadecamer of 8 large chains and 8 small chains; disulfide-linked. The disulfide link is formed within the large subunit homodimers.</text>
</comment>
<comment type="subcellular location">
    <subcellularLocation>
        <location>Plastid</location>
        <location>Chloroplast</location>
    </subcellularLocation>
</comment>
<comment type="PTM">
    <text evidence="1">The disulfide bond which can form in the large chain dimeric partners within the hexadecamer appears to be associated with oxidative stress and protein turnover.</text>
</comment>
<comment type="miscellaneous">
    <text evidence="1">The basic functional RuBisCO is composed of a large chain homodimer in a 'head-to-tail' conformation. In form I RuBisCO this homodimer is arranged in a barrel-like tetramer with the small subunits forming a tetrameric 'cap' on each end of the 'barrel'.</text>
</comment>
<comment type="similarity">
    <text evidence="1">Belongs to the RuBisCO large chain family. Type I subfamily.</text>
</comment>
<feature type="chain" id="PRO_0000062487" description="Ribulose bisphosphate carboxylase large chain">
    <location>
        <begin position="1" status="less than"/>
        <end position="469"/>
    </location>
</feature>
<feature type="active site" description="Proton acceptor" evidence="1">
    <location>
        <position position="166"/>
    </location>
</feature>
<feature type="active site" description="Proton acceptor" evidence="1">
    <location>
        <position position="285"/>
    </location>
</feature>
<feature type="binding site" description="in homodimeric partner" evidence="1">
    <location>
        <position position="114"/>
    </location>
    <ligand>
        <name>substrate</name>
    </ligand>
</feature>
<feature type="binding site" evidence="1">
    <location>
        <position position="164"/>
    </location>
    <ligand>
        <name>substrate</name>
    </ligand>
</feature>
<feature type="binding site" evidence="1">
    <location>
        <position position="168"/>
    </location>
    <ligand>
        <name>substrate</name>
    </ligand>
</feature>
<feature type="binding site" description="via carbamate group" evidence="1">
    <location>
        <position position="192"/>
    </location>
    <ligand>
        <name>Mg(2+)</name>
        <dbReference type="ChEBI" id="CHEBI:18420"/>
    </ligand>
</feature>
<feature type="binding site" evidence="1">
    <location>
        <position position="194"/>
    </location>
    <ligand>
        <name>Mg(2+)</name>
        <dbReference type="ChEBI" id="CHEBI:18420"/>
    </ligand>
</feature>
<feature type="binding site" evidence="1">
    <location>
        <position position="195"/>
    </location>
    <ligand>
        <name>Mg(2+)</name>
        <dbReference type="ChEBI" id="CHEBI:18420"/>
    </ligand>
</feature>
<feature type="binding site" evidence="1">
    <location>
        <position position="286"/>
    </location>
    <ligand>
        <name>substrate</name>
    </ligand>
</feature>
<feature type="binding site" evidence="1">
    <location>
        <position position="318"/>
    </location>
    <ligand>
        <name>substrate</name>
    </ligand>
</feature>
<feature type="binding site" evidence="1">
    <location>
        <position position="370"/>
    </location>
    <ligand>
        <name>substrate</name>
    </ligand>
</feature>
<feature type="site" description="Transition state stabilizer" evidence="1">
    <location>
        <position position="325"/>
    </location>
</feature>
<feature type="modified residue" description="N6,N6,N6-trimethyllysine" evidence="1">
    <location>
        <position position="5"/>
    </location>
</feature>
<feature type="modified residue" description="N6-carboxylysine" evidence="1">
    <location>
        <position position="192"/>
    </location>
</feature>
<feature type="disulfide bond" description="Interchain; in linked form" evidence="1">
    <location>
        <position position="238"/>
    </location>
</feature>
<feature type="non-terminal residue">
    <location>
        <position position="1"/>
    </location>
</feature>